<dbReference type="EMBL" id="AB016839">
    <property type="protein sequence ID" value="BAB19058.1"/>
    <property type="molecule type" value="mRNA"/>
</dbReference>
<dbReference type="EMBL" id="AJ577474">
    <property type="protein sequence ID" value="CAE12093.1"/>
    <property type="molecule type" value="mRNA"/>
</dbReference>
<dbReference type="EMBL" id="AK001650">
    <property type="protein sequence ID" value="BAA91810.1"/>
    <property type="molecule type" value="mRNA"/>
</dbReference>
<dbReference type="EMBL" id="AK021657">
    <property type="protein sequence ID" value="BAB13868.1"/>
    <property type="molecule type" value="mRNA"/>
</dbReference>
<dbReference type="EMBL" id="AK023321">
    <property type="protein sequence ID" value="BAB14525.1"/>
    <property type="molecule type" value="mRNA"/>
</dbReference>
<dbReference type="EMBL" id="AC073263">
    <property type="protein sequence ID" value="AAX93060.1"/>
    <property type="molecule type" value="Genomic_DNA"/>
</dbReference>
<dbReference type="EMBL" id="BC003398">
    <property type="protein sequence ID" value="AAH03398.1"/>
    <property type="molecule type" value="mRNA"/>
</dbReference>
<dbReference type="CCDS" id="CCDS46340.1">
    <molecule id="Q9H8S9-1"/>
</dbReference>
<dbReference type="RefSeq" id="NP_001304039.1">
    <property type="nucleotide sequence ID" value="NM_001317110.1"/>
</dbReference>
<dbReference type="RefSeq" id="NP_001304040.1">
    <property type="nucleotide sequence ID" value="NM_001317111.1"/>
</dbReference>
<dbReference type="RefSeq" id="NP_001304041.1">
    <property type="nucleotide sequence ID" value="NM_001317112.1"/>
</dbReference>
<dbReference type="RefSeq" id="NP_060691.2">
    <molecule id="Q9H8S9-1"/>
    <property type="nucleotide sequence ID" value="NM_018221.5"/>
</dbReference>
<dbReference type="PDB" id="1PI1">
    <property type="method" value="X-ray"/>
    <property type="resolution" value="2.00 A"/>
    <property type="chains" value="A=33-216"/>
</dbReference>
<dbReference type="PDB" id="4J1V">
    <property type="method" value="X-ray"/>
    <property type="resolution" value="1.95 A"/>
    <property type="chains" value="A/C=33-216"/>
</dbReference>
<dbReference type="PDB" id="4JIZ">
    <property type="method" value="X-ray"/>
    <property type="resolution" value="2.10 A"/>
    <property type="chains" value="A=40-211"/>
</dbReference>
<dbReference type="PDB" id="5BRK">
    <property type="method" value="X-ray"/>
    <property type="resolution" value="2.30 A"/>
    <property type="chains" value="A=1-216"/>
</dbReference>
<dbReference type="PDB" id="5BRM">
    <property type="method" value="X-ray"/>
    <property type="resolution" value="2.65 A"/>
    <property type="chains" value="A/B/C/D/E/F=41-216"/>
</dbReference>
<dbReference type="PDB" id="5TWF">
    <property type="method" value="X-ray"/>
    <property type="resolution" value="3.14 A"/>
    <property type="chains" value="A/B=1-216"/>
</dbReference>
<dbReference type="PDB" id="5TWG">
    <property type="method" value="X-ray"/>
    <property type="resolution" value="2.30 A"/>
    <property type="chains" value="A=1-216"/>
</dbReference>
<dbReference type="PDB" id="5TWH">
    <property type="method" value="X-ray"/>
    <property type="resolution" value="2.50 A"/>
    <property type="chains" value="A=1-216"/>
</dbReference>
<dbReference type="PDB" id="5XQZ">
    <property type="method" value="X-ray"/>
    <property type="resolution" value="2.10 A"/>
    <property type="chains" value="A/B=33-216"/>
</dbReference>
<dbReference type="PDB" id="6MCP">
    <property type="method" value="X-ray"/>
    <property type="resolution" value="2.50 A"/>
    <property type="chains" value="B/D=33-216"/>
</dbReference>
<dbReference type="PDB" id="6MCQ">
    <property type="method" value="X-ray"/>
    <property type="resolution" value="2.57 A"/>
    <property type="chains" value="B/D=33-216"/>
</dbReference>
<dbReference type="PDBsum" id="1PI1"/>
<dbReference type="PDBsum" id="4J1V"/>
<dbReference type="PDBsum" id="4JIZ"/>
<dbReference type="PDBsum" id="5BRK"/>
<dbReference type="PDBsum" id="5BRM"/>
<dbReference type="PDBsum" id="5TWF"/>
<dbReference type="PDBsum" id="5TWG"/>
<dbReference type="PDBsum" id="5TWH"/>
<dbReference type="PDBsum" id="5XQZ"/>
<dbReference type="PDBsum" id="6MCP"/>
<dbReference type="PDBsum" id="6MCQ"/>
<dbReference type="SMR" id="Q9H8S9"/>
<dbReference type="BioGRID" id="120527">
    <property type="interactions" value="86"/>
</dbReference>
<dbReference type="CORUM" id="Q9H8S9"/>
<dbReference type="DIP" id="DIP-36594N"/>
<dbReference type="FunCoup" id="Q9H8S9">
    <property type="interactions" value="3609"/>
</dbReference>
<dbReference type="IntAct" id="Q9H8S9">
    <property type="interactions" value="60"/>
</dbReference>
<dbReference type="MINT" id="Q9H8S9"/>
<dbReference type="STRING" id="9606.ENSP00000379364"/>
<dbReference type="iPTMnet" id="Q9H8S9"/>
<dbReference type="PhosphoSitePlus" id="Q9H8S9"/>
<dbReference type="SwissPalm" id="Q9H8S9"/>
<dbReference type="BioMuta" id="MOB1A"/>
<dbReference type="DMDM" id="56749356"/>
<dbReference type="OGP" id="Q9H8S9"/>
<dbReference type="jPOST" id="Q9H8S9"/>
<dbReference type="MassIVE" id="Q9H8S9"/>
<dbReference type="PaxDb" id="9606-ENSP00000379364"/>
<dbReference type="PeptideAtlas" id="Q9H8S9"/>
<dbReference type="ProteomicsDB" id="81237">
    <molecule id="Q9H8S9-1"/>
</dbReference>
<dbReference type="ProteomicsDB" id="81238">
    <molecule id="Q9H8S9-2"/>
</dbReference>
<dbReference type="Pumba" id="Q9H8S9"/>
<dbReference type="Antibodypedia" id="47474">
    <property type="antibodies" value="184 antibodies from 31 providers"/>
</dbReference>
<dbReference type="DNASU" id="55233"/>
<dbReference type="Ensembl" id="ENST00000396049.5">
    <molecule id="Q9H8S9-1"/>
    <property type="protein sequence ID" value="ENSP00000379364.3"/>
    <property type="gene ID" value="ENSG00000114978.18"/>
</dbReference>
<dbReference type="GeneID" id="55233"/>
<dbReference type="KEGG" id="hsa:55233"/>
<dbReference type="MANE-Select" id="ENST00000396049.5">
    <property type="protein sequence ID" value="ENSP00000379364.3"/>
    <property type="RefSeq nucleotide sequence ID" value="NM_018221.5"/>
    <property type="RefSeq protein sequence ID" value="NP_060691.2"/>
</dbReference>
<dbReference type="UCSC" id="uc002skh.5">
    <molecule id="Q9H8S9-1"/>
    <property type="organism name" value="human"/>
</dbReference>
<dbReference type="AGR" id="HGNC:16015"/>
<dbReference type="CTD" id="55233"/>
<dbReference type="DisGeNET" id="55233"/>
<dbReference type="GeneCards" id="MOB1A"/>
<dbReference type="HGNC" id="HGNC:16015">
    <property type="gene designation" value="MOB1A"/>
</dbReference>
<dbReference type="HPA" id="ENSG00000114978">
    <property type="expression patterns" value="Low tissue specificity"/>
</dbReference>
<dbReference type="MIM" id="609281">
    <property type="type" value="gene"/>
</dbReference>
<dbReference type="neXtProt" id="NX_Q9H8S9"/>
<dbReference type="OpenTargets" id="ENSG00000114978"/>
<dbReference type="PharmGKB" id="PA25894"/>
<dbReference type="VEuPathDB" id="HostDB:ENSG00000114978"/>
<dbReference type="eggNOG" id="KOG0440">
    <property type="taxonomic scope" value="Eukaryota"/>
</dbReference>
<dbReference type="GeneTree" id="ENSGT01120000271863"/>
<dbReference type="HOGENOM" id="CLU_038321_3_1_1"/>
<dbReference type="InParanoid" id="Q9H8S9"/>
<dbReference type="OMA" id="HKHAKAT"/>
<dbReference type="OrthoDB" id="8170117at2759"/>
<dbReference type="PAN-GO" id="Q9H8S9">
    <property type="GO annotations" value="5 GO annotations based on evolutionary models"/>
</dbReference>
<dbReference type="PhylomeDB" id="Q9H8S9"/>
<dbReference type="TreeFam" id="TF300789"/>
<dbReference type="PathwayCommons" id="Q9H8S9"/>
<dbReference type="Reactome" id="R-HSA-2028269">
    <property type="pathway name" value="Signaling by Hippo"/>
</dbReference>
<dbReference type="SignaLink" id="Q9H8S9"/>
<dbReference type="SIGNOR" id="Q9H8S9"/>
<dbReference type="BioGRID-ORCS" id="55233">
    <property type="hits" value="11 hits in 1149 CRISPR screens"/>
</dbReference>
<dbReference type="CD-CODE" id="8C2F96ED">
    <property type="entry name" value="Centrosome"/>
</dbReference>
<dbReference type="ChiTaRS" id="MOB1A">
    <property type="organism name" value="human"/>
</dbReference>
<dbReference type="EvolutionaryTrace" id="Q9H8S9"/>
<dbReference type="GeneWiki" id="MOBKL1B"/>
<dbReference type="GenomeRNAi" id="55233"/>
<dbReference type="Pharos" id="Q9H8S9">
    <property type="development level" value="Tbio"/>
</dbReference>
<dbReference type="PRO" id="PR:Q9H8S9"/>
<dbReference type="Proteomes" id="UP000005640">
    <property type="component" value="Chromosome 2"/>
</dbReference>
<dbReference type="RNAct" id="Q9H8S9">
    <property type="molecule type" value="protein"/>
</dbReference>
<dbReference type="Bgee" id="ENSG00000114978">
    <property type="expression patterns" value="Expressed in monocyte and 214 other cell types or tissues"/>
</dbReference>
<dbReference type="GO" id="GO:0005737">
    <property type="term" value="C:cytoplasm"/>
    <property type="evidence" value="ECO:0000314"/>
    <property type="project" value="UniProt"/>
</dbReference>
<dbReference type="GO" id="GO:0005829">
    <property type="term" value="C:cytosol"/>
    <property type="evidence" value="ECO:0000304"/>
    <property type="project" value="Reactome"/>
</dbReference>
<dbReference type="GO" id="GO:0070062">
    <property type="term" value="C:extracellular exosome"/>
    <property type="evidence" value="ECO:0007005"/>
    <property type="project" value="UniProtKB"/>
</dbReference>
<dbReference type="GO" id="GO:0005634">
    <property type="term" value="C:nucleus"/>
    <property type="evidence" value="ECO:0000318"/>
    <property type="project" value="GO_Central"/>
</dbReference>
<dbReference type="GO" id="GO:0046872">
    <property type="term" value="F:metal ion binding"/>
    <property type="evidence" value="ECO:0007669"/>
    <property type="project" value="UniProtKB-KW"/>
</dbReference>
<dbReference type="GO" id="GO:0030295">
    <property type="term" value="F:protein kinase activator activity"/>
    <property type="evidence" value="ECO:0000318"/>
    <property type="project" value="GO_Central"/>
</dbReference>
<dbReference type="GO" id="GO:0043539">
    <property type="term" value="F:protein serine/threonine kinase activator activity"/>
    <property type="evidence" value="ECO:0000314"/>
    <property type="project" value="UniProt"/>
</dbReference>
<dbReference type="GO" id="GO:0035329">
    <property type="term" value="P:hippo signaling"/>
    <property type="evidence" value="ECO:0000314"/>
    <property type="project" value="UniProtKB"/>
</dbReference>
<dbReference type="FunFam" id="1.20.140.30:FF:000001">
    <property type="entry name" value="MOB kinase activator 1A"/>
    <property type="match status" value="1"/>
</dbReference>
<dbReference type="Gene3D" id="1.20.140.30">
    <property type="entry name" value="MOB kinase activator"/>
    <property type="match status" value="1"/>
</dbReference>
<dbReference type="IDEAL" id="IID00737"/>
<dbReference type="InterPro" id="IPR005301">
    <property type="entry name" value="MOB_kinase_act_fam"/>
</dbReference>
<dbReference type="InterPro" id="IPR036703">
    <property type="entry name" value="MOB_kinase_act_sf"/>
</dbReference>
<dbReference type="PANTHER" id="PTHR22599">
    <property type="entry name" value="MPS ONE BINDER KINASE ACTIVATOR-LIKE MOB"/>
    <property type="match status" value="1"/>
</dbReference>
<dbReference type="Pfam" id="PF03637">
    <property type="entry name" value="Mob1_phocein"/>
    <property type="match status" value="1"/>
</dbReference>
<dbReference type="SMART" id="SM01388">
    <property type="entry name" value="Mob1_phocein"/>
    <property type="match status" value="1"/>
</dbReference>
<dbReference type="SUPFAM" id="SSF101152">
    <property type="entry name" value="Mob1/phocein"/>
    <property type="match status" value="1"/>
</dbReference>
<feature type="initiator methionine" description="Removed" evidence="1 10">
    <location>
        <position position="1"/>
    </location>
</feature>
<feature type="chain" id="PRO_0000193566" description="MOB kinase activator 1A">
    <location>
        <begin position="2"/>
        <end position="216"/>
    </location>
</feature>
<feature type="binding site" evidence="2">
    <location>
        <position position="79"/>
    </location>
    <ligand>
        <name>Zn(2+)</name>
        <dbReference type="ChEBI" id="CHEBI:29105"/>
    </ligand>
</feature>
<feature type="binding site" evidence="2">
    <location>
        <position position="84"/>
    </location>
    <ligand>
        <name>Zn(2+)</name>
        <dbReference type="ChEBI" id="CHEBI:29105"/>
    </ligand>
</feature>
<feature type="binding site" evidence="2">
    <location>
        <position position="161"/>
    </location>
    <ligand>
        <name>Zn(2+)</name>
        <dbReference type="ChEBI" id="CHEBI:29105"/>
    </ligand>
</feature>
<feature type="binding site" evidence="2">
    <location>
        <position position="166"/>
    </location>
    <ligand>
        <name>Zn(2+)</name>
        <dbReference type="ChEBI" id="CHEBI:29105"/>
    </ligand>
</feature>
<feature type="modified residue" description="N-acetylserine" evidence="1 10">
    <location>
        <position position="2"/>
    </location>
</feature>
<feature type="modified residue" description="Phosphothreonine" evidence="4">
    <location>
        <position position="12"/>
    </location>
</feature>
<feature type="modified residue" description="Phosphothreonine" evidence="4">
    <location>
        <position position="35"/>
    </location>
</feature>
<feature type="modified residue" description="Phosphothreonine; by STK3/MST2" evidence="5">
    <location>
        <position position="74"/>
    </location>
</feature>
<feature type="modified residue" description="Phosphothreonine" evidence="5">
    <location>
        <position position="181"/>
    </location>
</feature>
<feature type="splice variant" id="VSP_012295" description="In isoform 2." evidence="7">
    <original>VPFPKNFMSVA</original>
    <variation>ELTLSKYSFFF</variation>
    <location>
        <begin position="138"/>
        <end position="148"/>
    </location>
</feature>
<feature type="splice variant" id="VSP_012296" description="In isoform 2." evidence="7">
    <location>
        <begin position="149"/>
        <end position="216"/>
    </location>
</feature>
<feature type="sequence conflict" description="In Ref. 3; BAB14525." evidence="8" ref="3">
    <original>F</original>
    <variation>L</variation>
    <location>
        <position position="5"/>
    </location>
</feature>
<feature type="sequence conflict" description="In Ref. 3; BAA91810." evidence="8" ref="3">
    <original>E</original>
    <variation>G</variation>
    <location>
        <position position="176"/>
    </location>
</feature>
<feature type="strand" evidence="14">
    <location>
        <begin position="12"/>
        <end position="15"/>
    </location>
</feature>
<feature type="helix" evidence="15">
    <location>
        <begin position="24"/>
        <end position="35"/>
    </location>
</feature>
<feature type="helix" evidence="15">
    <location>
        <begin position="36"/>
        <end position="38"/>
    </location>
</feature>
<feature type="turn" evidence="12">
    <location>
        <begin position="42"/>
        <end position="45"/>
    </location>
</feature>
<feature type="helix" evidence="12">
    <location>
        <begin position="53"/>
        <end position="75"/>
    </location>
</feature>
<feature type="helix" evidence="12">
    <location>
        <begin position="76"/>
        <end position="78"/>
    </location>
</feature>
<feature type="turn" evidence="12">
    <location>
        <begin position="81"/>
        <end position="83"/>
    </location>
</feature>
<feature type="strand" evidence="12">
    <location>
        <begin position="88"/>
        <end position="90"/>
    </location>
</feature>
<feature type="strand" evidence="13">
    <location>
        <begin position="93"/>
        <end position="95"/>
    </location>
</feature>
<feature type="strand" evidence="11">
    <location>
        <begin position="100"/>
        <end position="102"/>
    </location>
</feature>
<feature type="helix" evidence="12">
    <location>
        <begin position="111"/>
        <end position="126"/>
    </location>
</feature>
<feature type="turn" evidence="12">
    <location>
        <begin position="129"/>
        <end position="131"/>
    </location>
</feature>
<feature type="strand" evidence="13">
    <location>
        <begin position="135"/>
        <end position="137"/>
    </location>
</feature>
<feature type="helix" evidence="12">
    <location>
        <begin position="144"/>
        <end position="165"/>
    </location>
</feature>
<feature type="helix" evidence="12">
    <location>
        <begin position="167"/>
        <end position="172"/>
    </location>
</feature>
<feature type="turn" evidence="15">
    <location>
        <begin position="173"/>
        <end position="175"/>
    </location>
</feature>
<feature type="helix" evidence="12">
    <location>
        <begin position="176"/>
        <end position="193"/>
    </location>
</feature>
<feature type="helix" evidence="12">
    <location>
        <begin position="198"/>
        <end position="201"/>
    </location>
</feature>
<feature type="helix" evidence="12">
    <location>
        <begin position="202"/>
        <end position="204"/>
    </location>
</feature>
<feature type="helix" evidence="12">
    <location>
        <begin position="205"/>
        <end position="211"/>
    </location>
</feature>
<keyword id="KW-0002">3D-structure</keyword>
<keyword id="KW-0007">Acetylation</keyword>
<keyword id="KW-0025">Alternative splicing</keyword>
<keyword id="KW-0903">Direct protein sequencing</keyword>
<keyword id="KW-0479">Metal-binding</keyword>
<keyword id="KW-0597">Phosphoprotein</keyword>
<keyword id="KW-1267">Proteomics identification</keyword>
<keyword id="KW-1185">Reference proteome</keyword>
<keyword id="KW-0862">Zinc</keyword>
<organism>
    <name type="scientific">Homo sapiens</name>
    <name type="common">Human</name>
    <dbReference type="NCBI Taxonomy" id="9606"/>
    <lineage>
        <taxon>Eukaryota</taxon>
        <taxon>Metazoa</taxon>
        <taxon>Chordata</taxon>
        <taxon>Craniata</taxon>
        <taxon>Vertebrata</taxon>
        <taxon>Euteleostomi</taxon>
        <taxon>Mammalia</taxon>
        <taxon>Eutheria</taxon>
        <taxon>Euarchontoglires</taxon>
        <taxon>Primates</taxon>
        <taxon>Haplorrhini</taxon>
        <taxon>Catarrhini</taxon>
        <taxon>Hominidae</taxon>
        <taxon>Homo</taxon>
    </lineage>
</organism>
<sequence length="216" mass="25080">MSFLFSSRSSKTFKPKKNIPEGSHQYELLKHAEATLGSGNLRQAVMLPEGEDLNEWIAVNTVDFFNQINMLYGTITEFCTEASCPVMSAGPRYEYHWADGTNIKKPIKCSAPKYIDYLMTWVQDQLDDETLFPSKIGVPFPKNFMSVAKTILKRLFRVYAHIYHQHFDSVMQLQEEAHLNTSFKHFIFFVQEFNLIDRRELAPLQELIEKLGSKDR</sequence>
<proteinExistence type="evidence at protein level"/>
<protein>
    <recommendedName>
        <fullName>MOB kinase activator 1A</fullName>
    </recommendedName>
    <alternativeName>
        <fullName>Mob1 alpha</fullName>
        <shortName>Mob1A</shortName>
    </alternativeName>
    <alternativeName>
        <fullName>Mob1 homolog 1B</fullName>
    </alternativeName>
    <alternativeName>
        <fullName>Mps one binder kinase activator-like 1B</fullName>
    </alternativeName>
</protein>
<name>MOB1A_HUMAN</name>
<evidence type="ECO:0000269" key="1">
    <source>
    </source>
</evidence>
<evidence type="ECO:0000269" key="2">
    <source>
    </source>
</evidence>
<evidence type="ECO:0000269" key="3">
    <source>
    </source>
</evidence>
<evidence type="ECO:0000269" key="4">
    <source>
    </source>
</evidence>
<evidence type="ECO:0000269" key="5">
    <source>
    </source>
</evidence>
<evidence type="ECO:0000269" key="6">
    <source>
    </source>
</evidence>
<evidence type="ECO:0000303" key="7">
    <source>
    </source>
</evidence>
<evidence type="ECO:0000305" key="8"/>
<evidence type="ECO:0000312" key="9">
    <source>
        <dbReference type="HGNC" id="HGNC:16015"/>
    </source>
</evidence>
<evidence type="ECO:0007744" key="10">
    <source>
    </source>
</evidence>
<evidence type="ECO:0007829" key="11">
    <source>
        <dbReference type="PDB" id="1PI1"/>
    </source>
</evidence>
<evidence type="ECO:0007829" key="12">
    <source>
        <dbReference type="PDB" id="4J1V"/>
    </source>
</evidence>
<evidence type="ECO:0007829" key="13">
    <source>
        <dbReference type="PDB" id="4JIZ"/>
    </source>
</evidence>
<evidence type="ECO:0007829" key="14">
    <source>
        <dbReference type="PDB" id="5BRK"/>
    </source>
</evidence>
<evidence type="ECO:0007829" key="15">
    <source>
        <dbReference type="PDB" id="5TWG"/>
    </source>
</evidence>
<accession>Q9H8S9</accession>
<accession>Q53S34</accession>
<accession>Q9H3T5</accession>
<accession>Q9HAI0</accession>
<accession>Q9NVE2</accession>
<comment type="function">
    <text evidence="3 5 6">Activator of LATS1/2 in the Hippo signaling pathway which plays a pivotal role in organ size control and tumor suppression by restricting proliferation and promoting apoptosis. The core of this pathway is composed of a kinase cascade wherein STK3/MST2 and STK4/MST1, in complex with its regulatory protein SAV1, phosphorylates and activates LATS1/2 in complex with its regulatory protein MOB1, which in turn phosphorylates and inactivates YAP1 oncoprotein and WWTR1/TAZ. Phosphorylation of YAP1 by LATS1/2 inhibits its translocation into the nucleus to regulate cellular genes important for cell proliferation, cell death, and cell migration. Stimulates the kinase activity of STK38 and STK38L. Acts cooperatively with STK3/MST2 to activate STK38.</text>
</comment>
<comment type="subunit">
    <text evidence="3 5 6">Binds STK38 and STK38L. Interacts with LATS1 and LATS2. Forms a tripartite complex with STK38 and STK3/MST2.</text>
</comment>
<comment type="interaction">
    <interactant intactId="EBI-748229">
        <id>Q9H8S9</id>
    </interactant>
    <interactant intactId="EBI-7247651">
        <id>Q96MX0</id>
        <label>CMTM3</label>
    </interactant>
    <organismsDiffer>false</organismsDiffer>
    <experiments>3</experiments>
</comment>
<comment type="interaction">
    <interactant intactId="EBI-748229">
        <id>Q9H8S9</id>
    </interactant>
    <interactant intactId="EBI-8638992">
        <id>Q9NWS6</id>
        <label>FAM118A</label>
    </interactant>
    <organismsDiffer>false</organismsDiffer>
    <experiments>3</experiments>
</comment>
<comment type="interaction">
    <interactant intactId="EBI-748229">
        <id>Q9H8S9</id>
    </interactant>
    <interactant intactId="EBI-10175124">
        <id>Q8IZU0</id>
        <label>FAM9B</label>
    </interactant>
    <organismsDiffer>false</organismsDiffer>
    <experiments>3</experiments>
</comment>
<comment type="interaction">
    <interactant intactId="EBI-748229">
        <id>Q9H8S9</id>
    </interactant>
    <interactant intactId="EBI-948296">
        <id>Q9UKD1</id>
        <label>GMEB2</label>
    </interactant>
    <organismsDiffer>false</organismsDiffer>
    <experiments>3</experiments>
</comment>
<comment type="interaction">
    <interactant intactId="EBI-748229">
        <id>Q9H8S9</id>
    </interactant>
    <interactant intactId="EBI-1640423">
        <id>Q9H2S9</id>
        <label>IKZF4</label>
    </interactant>
    <organismsDiffer>false</organismsDiffer>
    <experiments>3</experiments>
</comment>
<comment type="interaction">
    <interactant intactId="EBI-748229">
        <id>Q9H8S9</id>
    </interactant>
    <interactant intactId="EBI-2556193">
        <id>Q63ZY3</id>
        <label>KANK2</label>
    </interactant>
    <organismsDiffer>false</organismsDiffer>
    <experiments>6</experiments>
</comment>
<comment type="interaction">
    <interactant intactId="EBI-748229">
        <id>Q9H8S9</id>
    </interactant>
    <interactant intactId="EBI-739657">
        <id>Q9BQD3</id>
        <label>KXD1</label>
    </interactant>
    <organismsDiffer>false</organismsDiffer>
    <experiments>4</experiments>
</comment>
<comment type="interaction">
    <interactant intactId="EBI-748229">
        <id>Q9H8S9</id>
    </interactant>
    <interactant intactId="EBI-444209">
        <id>O95835</id>
        <label>LATS1</label>
    </interactant>
    <organismsDiffer>false</organismsDiffer>
    <experiments>9</experiments>
</comment>
<comment type="interaction">
    <interactant intactId="EBI-748229">
        <id>Q9H8S9</id>
    </interactant>
    <interactant intactId="EBI-3506895">
        <id>Q9NRM7</id>
        <label>LATS2</label>
    </interactant>
    <organismsDiffer>false</organismsDiffer>
    <experiments>5</experiments>
</comment>
<comment type="interaction">
    <interactant intactId="EBI-748229">
        <id>Q9H8S9</id>
    </interactant>
    <interactant intactId="EBI-2824799">
        <id>Q9NQ48</id>
        <label>LZTFL1</label>
    </interactant>
    <organismsDiffer>false</organismsDiffer>
    <experiments>3</experiments>
</comment>
<comment type="interaction">
    <interactant intactId="EBI-748229">
        <id>Q9H8S9</id>
    </interactant>
    <interactant intactId="EBI-2563309">
        <id>P49585</id>
        <label>PCYT1A</label>
    </interactant>
    <organismsDiffer>false</organismsDiffer>
    <experiments>3</experiments>
</comment>
<comment type="interaction">
    <interactant intactId="EBI-748229">
        <id>Q9H8S9</id>
    </interactant>
    <interactant intactId="EBI-727037">
        <id>Q9UH03</id>
        <label>SEPTIN3</label>
    </interactant>
    <organismsDiffer>false</organismsDiffer>
    <experiments>6</experiments>
</comment>
<comment type="interaction">
    <interactant intactId="EBI-748229">
        <id>Q9H8S9</id>
    </interactant>
    <interactant intactId="EBI-992580">
        <id>Q13188</id>
        <label>STK3</label>
    </interactant>
    <organismsDiffer>false</organismsDiffer>
    <experiments>7</experiments>
</comment>
<comment type="interaction">
    <interactant intactId="EBI-748229">
        <id>Q9H8S9</id>
    </interactant>
    <interactant intactId="EBI-458376">
        <id>Q15208</id>
        <label>STK38</label>
    </interactant>
    <organismsDiffer>false</organismsDiffer>
    <experiments>3</experiments>
</comment>
<comment type="interaction">
    <interactant intactId="EBI-748229">
        <id>Q9H8S9</id>
    </interactant>
    <interactant intactId="EBI-991501">
        <id>Q9Y2H1</id>
        <label>STK38L</label>
    </interactant>
    <organismsDiffer>false</organismsDiffer>
    <experiments>9</experiments>
</comment>
<comment type="interaction">
    <interactant intactId="EBI-748229">
        <id>Q9H8S9</id>
    </interactant>
    <interactant intactId="EBI-367376">
        <id>Q13043</id>
        <label>STK4</label>
    </interactant>
    <organismsDiffer>false</organismsDiffer>
    <experiments>9</experiments>
</comment>
<comment type="interaction">
    <interactant intactId="EBI-748229">
        <id>Q9H8S9</id>
    </interactant>
    <interactant intactId="EBI-743494">
        <id>P48775</id>
        <label>TDO2</label>
    </interactant>
    <organismsDiffer>false</organismsDiffer>
    <experiments>6</experiments>
</comment>
<comment type="interaction">
    <interactant intactId="EBI-748229">
        <id>Q9H8S9</id>
    </interactant>
    <interactant intactId="EBI-10278423">
        <id>Q8WZ59</id>
        <label>TMEM190</label>
    </interactant>
    <organismsDiffer>false</organismsDiffer>
    <experiments>3</experiments>
</comment>
<comment type="interaction">
    <interactant intactId="EBI-748229">
        <id>Q9H8S9</id>
    </interactant>
    <interactant intactId="EBI-742790">
        <id>Q13049</id>
        <label>TRIM32</label>
    </interactant>
    <organismsDiffer>false</organismsDiffer>
    <experiments>3</experiments>
</comment>
<comment type="interaction">
    <interactant intactId="EBI-748229">
        <id>Q9H8S9</id>
    </interactant>
    <interactant intactId="EBI-712969">
        <id>Q9Y3C0</id>
        <label>WASHC3</label>
    </interactant>
    <organismsDiffer>false</organismsDiffer>
    <experiments>3</experiments>
</comment>
<comment type="interaction">
    <interactant intactId="EBI-748229">
        <id>Q9H8S9</id>
    </interactant>
    <interactant intactId="EBI-42490031">
        <id>Q5ZU83</id>
        <label>lpg1924</label>
    </interactant>
    <organismsDiffer>true</organismsDiffer>
    <experiments>3</experiments>
</comment>
<comment type="interaction">
    <interactant intactId="EBI-748229">
        <id>Q9H8S9</id>
    </interactant>
    <interactant intactId="EBI-6863748">
        <id>PRO_0000037551</id>
        <dbReference type="UniProtKB" id="Q9WMX2"/>
    </interactant>
    <organismsDiffer>true</organismsDiffer>
    <experiments>2</experiments>
</comment>
<comment type="alternative products">
    <event type="alternative splicing"/>
    <isoform>
        <id>Q9H8S9-1</id>
        <name>1</name>
        <sequence type="displayed"/>
    </isoform>
    <isoform>
        <id>Q9H8S9-2</id>
        <name>2</name>
        <sequence type="described" ref="VSP_012295 VSP_012296"/>
    </isoform>
</comment>
<comment type="tissue specificity">
    <text evidence="6">Adrenal gland, bone marrow, brain, placenta, prostate, salivary gland, skeletal muscle, testis, thymus, thyroid gland, heart, spinal cord, fetal brain and fetal liver.</text>
</comment>
<comment type="PTM">
    <text evidence="3 4 5">Phosphorylated by STK3/MST2 and STK4/MST1 and this phosphorylation enhances its binding to LATS1.</text>
</comment>
<comment type="miscellaneous">
    <molecule>Isoform 2</molecule>
    <text evidence="8">May be due to an intron retention.</text>
</comment>
<comment type="similarity">
    <text evidence="8">Belongs to the MOB1/phocein family.</text>
</comment>
<gene>
    <name evidence="9" type="primary">MOB1A</name>
    <name type="synonym">C2orf6</name>
    <name type="synonym">MOB4B</name>
    <name type="synonym">MOBK1B</name>
    <name type="synonym">MOBKL1B</name>
</gene>
<reference key="1">
    <citation type="submission" date="1998-08" db="EMBL/GenBank/DDBJ databases">
        <title>Human MOB1.</title>
        <authorList>
            <person name="Kagaya S."/>
            <person name="Kotani S."/>
            <person name="Todokoro K."/>
        </authorList>
    </citation>
    <scope>NUCLEOTIDE SEQUENCE [MRNA] (ISOFORM 1)</scope>
</reference>
<reference key="2">
    <citation type="submission" date="2003-07" db="EMBL/GenBank/DDBJ databases">
        <title>Characterization of the human Mob-1 like proteins.</title>
        <authorList>
            <person name="Florindo C.S."/>
            <person name="Tavares A.A."/>
        </authorList>
    </citation>
    <scope>NUCLEOTIDE SEQUENCE [MRNA] (ISOFORM 1)</scope>
</reference>
<reference key="3">
    <citation type="journal article" date="2004" name="Nat. Genet.">
        <title>Complete sequencing and characterization of 21,243 full-length human cDNAs.</title>
        <authorList>
            <person name="Ota T."/>
            <person name="Suzuki Y."/>
            <person name="Nishikawa T."/>
            <person name="Otsuki T."/>
            <person name="Sugiyama T."/>
            <person name="Irie R."/>
            <person name="Wakamatsu A."/>
            <person name="Hayashi K."/>
            <person name="Sato H."/>
            <person name="Nagai K."/>
            <person name="Kimura K."/>
            <person name="Makita H."/>
            <person name="Sekine M."/>
            <person name="Obayashi M."/>
            <person name="Nishi T."/>
            <person name="Shibahara T."/>
            <person name="Tanaka T."/>
            <person name="Ishii S."/>
            <person name="Yamamoto J."/>
            <person name="Saito K."/>
            <person name="Kawai Y."/>
            <person name="Isono Y."/>
            <person name="Nakamura Y."/>
            <person name="Nagahari K."/>
            <person name="Murakami K."/>
            <person name="Yasuda T."/>
            <person name="Iwayanagi T."/>
            <person name="Wagatsuma M."/>
            <person name="Shiratori A."/>
            <person name="Sudo H."/>
            <person name="Hosoiri T."/>
            <person name="Kaku Y."/>
            <person name="Kodaira H."/>
            <person name="Kondo H."/>
            <person name="Sugawara M."/>
            <person name="Takahashi M."/>
            <person name="Kanda K."/>
            <person name="Yokoi T."/>
            <person name="Furuya T."/>
            <person name="Kikkawa E."/>
            <person name="Omura Y."/>
            <person name="Abe K."/>
            <person name="Kamihara K."/>
            <person name="Katsuta N."/>
            <person name="Sato K."/>
            <person name="Tanikawa M."/>
            <person name="Yamazaki M."/>
            <person name="Ninomiya K."/>
            <person name="Ishibashi T."/>
            <person name="Yamashita H."/>
            <person name="Murakawa K."/>
            <person name="Fujimori K."/>
            <person name="Tanai H."/>
            <person name="Kimata M."/>
            <person name="Watanabe M."/>
            <person name="Hiraoka S."/>
            <person name="Chiba Y."/>
            <person name="Ishida S."/>
            <person name="Ono Y."/>
            <person name="Takiguchi S."/>
            <person name="Watanabe S."/>
            <person name="Yosida M."/>
            <person name="Hotuta T."/>
            <person name="Kusano J."/>
            <person name="Kanehori K."/>
            <person name="Takahashi-Fujii A."/>
            <person name="Hara H."/>
            <person name="Tanase T.-O."/>
            <person name="Nomura Y."/>
            <person name="Togiya S."/>
            <person name="Komai F."/>
            <person name="Hara R."/>
            <person name="Takeuchi K."/>
            <person name="Arita M."/>
            <person name="Imose N."/>
            <person name="Musashino K."/>
            <person name="Yuuki H."/>
            <person name="Oshima A."/>
            <person name="Sasaki N."/>
            <person name="Aotsuka S."/>
            <person name="Yoshikawa Y."/>
            <person name="Matsunawa H."/>
            <person name="Ichihara T."/>
            <person name="Shiohata N."/>
            <person name="Sano S."/>
            <person name="Moriya S."/>
            <person name="Momiyama H."/>
            <person name="Satoh N."/>
            <person name="Takami S."/>
            <person name="Terashima Y."/>
            <person name="Suzuki O."/>
            <person name="Nakagawa S."/>
            <person name="Senoh A."/>
            <person name="Mizoguchi H."/>
            <person name="Goto Y."/>
            <person name="Shimizu F."/>
            <person name="Wakebe H."/>
            <person name="Hishigaki H."/>
            <person name="Watanabe T."/>
            <person name="Sugiyama A."/>
            <person name="Takemoto M."/>
            <person name="Kawakami B."/>
            <person name="Yamazaki M."/>
            <person name="Watanabe K."/>
            <person name="Kumagai A."/>
            <person name="Itakura S."/>
            <person name="Fukuzumi Y."/>
            <person name="Fujimori Y."/>
            <person name="Komiyama M."/>
            <person name="Tashiro H."/>
            <person name="Tanigami A."/>
            <person name="Fujiwara T."/>
            <person name="Ono T."/>
            <person name="Yamada K."/>
            <person name="Fujii Y."/>
            <person name="Ozaki K."/>
            <person name="Hirao M."/>
            <person name="Ohmori Y."/>
            <person name="Kawabata A."/>
            <person name="Hikiji T."/>
            <person name="Kobatake N."/>
            <person name="Inagaki H."/>
            <person name="Ikema Y."/>
            <person name="Okamoto S."/>
            <person name="Okitani R."/>
            <person name="Kawakami T."/>
            <person name="Noguchi S."/>
            <person name="Itoh T."/>
            <person name="Shigeta K."/>
            <person name="Senba T."/>
            <person name="Matsumura K."/>
            <person name="Nakajima Y."/>
            <person name="Mizuno T."/>
            <person name="Morinaga M."/>
            <person name="Sasaki M."/>
            <person name="Togashi T."/>
            <person name="Oyama M."/>
            <person name="Hata H."/>
            <person name="Watanabe M."/>
            <person name="Komatsu T."/>
            <person name="Mizushima-Sugano J."/>
            <person name="Satoh T."/>
            <person name="Shirai Y."/>
            <person name="Takahashi Y."/>
            <person name="Nakagawa K."/>
            <person name="Okumura K."/>
            <person name="Nagase T."/>
            <person name="Nomura N."/>
            <person name="Kikuchi H."/>
            <person name="Masuho Y."/>
            <person name="Yamashita R."/>
            <person name="Nakai K."/>
            <person name="Yada T."/>
            <person name="Nakamura Y."/>
            <person name="Ohara O."/>
            <person name="Isogai T."/>
            <person name="Sugano S."/>
        </authorList>
    </citation>
    <scope>NUCLEOTIDE SEQUENCE [LARGE SCALE MRNA] (ISOFORMS 1 AND 2)</scope>
    <source>
        <tissue>Embryo</tissue>
        <tissue>Ovary</tissue>
    </source>
</reference>
<reference key="4">
    <citation type="journal article" date="2005" name="Nature">
        <title>Generation and annotation of the DNA sequences of human chromosomes 2 and 4.</title>
        <authorList>
            <person name="Hillier L.W."/>
            <person name="Graves T.A."/>
            <person name="Fulton R.S."/>
            <person name="Fulton L.A."/>
            <person name="Pepin K.H."/>
            <person name="Minx P."/>
            <person name="Wagner-McPherson C."/>
            <person name="Layman D."/>
            <person name="Wylie K."/>
            <person name="Sekhon M."/>
            <person name="Becker M.C."/>
            <person name="Fewell G.A."/>
            <person name="Delehaunty K.D."/>
            <person name="Miner T.L."/>
            <person name="Nash W.E."/>
            <person name="Kremitzki C."/>
            <person name="Oddy L."/>
            <person name="Du H."/>
            <person name="Sun H."/>
            <person name="Bradshaw-Cordum H."/>
            <person name="Ali J."/>
            <person name="Carter J."/>
            <person name="Cordes M."/>
            <person name="Harris A."/>
            <person name="Isak A."/>
            <person name="van Brunt A."/>
            <person name="Nguyen C."/>
            <person name="Du F."/>
            <person name="Courtney L."/>
            <person name="Kalicki J."/>
            <person name="Ozersky P."/>
            <person name="Abbott S."/>
            <person name="Armstrong J."/>
            <person name="Belter E.A."/>
            <person name="Caruso L."/>
            <person name="Cedroni M."/>
            <person name="Cotton M."/>
            <person name="Davidson T."/>
            <person name="Desai A."/>
            <person name="Elliott G."/>
            <person name="Erb T."/>
            <person name="Fronick C."/>
            <person name="Gaige T."/>
            <person name="Haakenson W."/>
            <person name="Haglund K."/>
            <person name="Holmes A."/>
            <person name="Harkins R."/>
            <person name="Kim K."/>
            <person name="Kruchowski S.S."/>
            <person name="Strong C.M."/>
            <person name="Grewal N."/>
            <person name="Goyea E."/>
            <person name="Hou S."/>
            <person name="Levy A."/>
            <person name="Martinka S."/>
            <person name="Mead K."/>
            <person name="McLellan M.D."/>
            <person name="Meyer R."/>
            <person name="Randall-Maher J."/>
            <person name="Tomlinson C."/>
            <person name="Dauphin-Kohlberg S."/>
            <person name="Kozlowicz-Reilly A."/>
            <person name="Shah N."/>
            <person name="Swearengen-Shahid S."/>
            <person name="Snider J."/>
            <person name="Strong J.T."/>
            <person name="Thompson J."/>
            <person name="Yoakum M."/>
            <person name="Leonard S."/>
            <person name="Pearman C."/>
            <person name="Trani L."/>
            <person name="Radionenko M."/>
            <person name="Waligorski J.E."/>
            <person name="Wang C."/>
            <person name="Rock S.M."/>
            <person name="Tin-Wollam A.-M."/>
            <person name="Maupin R."/>
            <person name="Latreille P."/>
            <person name="Wendl M.C."/>
            <person name="Yang S.-P."/>
            <person name="Pohl C."/>
            <person name="Wallis J.W."/>
            <person name="Spieth J."/>
            <person name="Bieri T.A."/>
            <person name="Berkowicz N."/>
            <person name="Nelson J.O."/>
            <person name="Osborne J."/>
            <person name="Ding L."/>
            <person name="Meyer R."/>
            <person name="Sabo A."/>
            <person name="Shotland Y."/>
            <person name="Sinha P."/>
            <person name="Wohldmann P.E."/>
            <person name="Cook L.L."/>
            <person name="Hickenbotham M.T."/>
            <person name="Eldred J."/>
            <person name="Williams D."/>
            <person name="Jones T.A."/>
            <person name="She X."/>
            <person name="Ciccarelli F.D."/>
            <person name="Izaurralde E."/>
            <person name="Taylor J."/>
            <person name="Schmutz J."/>
            <person name="Myers R.M."/>
            <person name="Cox D.R."/>
            <person name="Huang X."/>
            <person name="McPherson J.D."/>
            <person name="Mardis E.R."/>
            <person name="Clifton S.W."/>
            <person name="Warren W.C."/>
            <person name="Chinwalla A.T."/>
            <person name="Eddy S.R."/>
            <person name="Marra M.A."/>
            <person name="Ovcharenko I."/>
            <person name="Furey T.S."/>
            <person name="Miller W."/>
            <person name="Eichler E.E."/>
            <person name="Bork P."/>
            <person name="Suyama M."/>
            <person name="Torrents D."/>
            <person name="Waterston R.H."/>
            <person name="Wilson R.K."/>
        </authorList>
    </citation>
    <scope>NUCLEOTIDE SEQUENCE [LARGE SCALE GENOMIC DNA]</scope>
</reference>
<reference key="5">
    <citation type="journal article" date="2004" name="Genome Res.">
        <title>The status, quality, and expansion of the NIH full-length cDNA project: the Mammalian Gene Collection (MGC).</title>
        <authorList>
            <consortium name="The MGC Project Team"/>
        </authorList>
    </citation>
    <scope>NUCLEOTIDE SEQUENCE [LARGE SCALE MRNA] (ISOFORM 1)</scope>
    <source>
        <tissue>Placenta</tissue>
    </source>
</reference>
<reference key="6">
    <citation type="journal article" date="2003" name="Nat. Biotechnol.">
        <title>Exploring proteomes and analyzing protein processing by mass spectrometric identification of sorted N-terminal peptides.</title>
        <authorList>
            <person name="Gevaert K."/>
            <person name="Goethals M."/>
            <person name="Martens L."/>
            <person name="Van Damme J."/>
            <person name="Staes A."/>
            <person name="Thomas G.R."/>
            <person name="Vandekerckhove J."/>
        </authorList>
    </citation>
    <scope>PROTEIN SEQUENCE OF 2-8</scope>
    <scope>ACETYLATION AT SER-2</scope>
    <source>
        <tissue>Platelet</tissue>
    </source>
</reference>
<reference key="7">
    <citation type="journal article" date="2004" name="J. Biol. Chem.">
        <title>Mechanism of activation of NDR (nuclear Dbf2-related) protein kinase by the hMOB1 protein.</title>
        <authorList>
            <person name="Bichsel S.J."/>
            <person name="Tamaskovic R."/>
            <person name="Stegert M.R."/>
            <person name="Hemmings B.A."/>
        </authorList>
    </citation>
    <scope>FUNCTION</scope>
    <scope>PHOSPHORYLATION</scope>
    <scope>INTERACTION WITH STK38 AND STK38L</scope>
</reference>
<reference key="8">
    <citation type="journal article" date="2008" name="Curr. Biol.">
        <title>MOBKL1A/MOBKL1B phosphorylation by MST1 and MST2 inhibits cell proliferation.</title>
        <authorList>
            <person name="Praskova M."/>
            <person name="Xia F."/>
            <person name="Avruch J."/>
        </authorList>
    </citation>
    <scope>PHOSPHORYLATION AT THR-12 AND THR-35 BY STK3/MST2 AND STK4/MST1</scope>
</reference>
<reference key="9">
    <citation type="journal article" date="2008" name="Oncogene">
        <title>Threonine 74 of MOB1 is a putative key phosphorylation site by MST2 to form the scaffold to activate nuclear Dbf2-related kinase 1.</title>
        <authorList>
            <person name="Hirabayashi S."/>
            <person name="Nakagawa K."/>
            <person name="Sumita K."/>
            <person name="Hidaka S."/>
            <person name="Kawai T."/>
            <person name="Ikeda M."/>
            <person name="Kawata A."/>
            <person name="Ohno K."/>
            <person name="Hata Y."/>
        </authorList>
    </citation>
    <scope>FUNCTION</scope>
    <scope>PHOSPHORYLATION AT THR-74 AND THR-181</scope>
    <scope>INTERACTION WITH STK38 AND STK3/MST2</scope>
</reference>
<reference key="10">
    <citation type="journal article" date="2010" name="Int. J. Cancer">
        <title>Molecular characterization of human homologs of yeast MOB1.</title>
        <authorList>
            <person name="Chow A."/>
            <person name="Hao Y."/>
            <person name="Yang X."/>
        </authorList>
    </citation>
    <scope>FUNCTION</scope>
    <scope>INTERACTION WITH LATS1 AND LATS2</scope>
    <scope>TISSUE SPECIFICITY</scope>
</reference>
<reference key="11">
    <citation type="journal article" date="2012" name="Proc. Natl. Acad. Sci. U.S.A.">
        <title>N-terminal acetylome analyses and functional insights of the N-terminal acetyltransferase NatB.</title>
        <authorList>
            <person name="Van Damme P."/>
            <person name="Lasa M."/>
            <person name="Polevoda B."/>
            <person name="Gazquez C."/>
            <person name="Elosegui-Artola A."/>
            <person name="Kim D.S."/>
            <person name="De Juan-Pardo E."/>
            <person name="Demeyer K."/>
            <person name="Hole K."/>
            <person name="Larrea E."/>
            <person name="Timmerman E."/>
            <person name="Prieto J."/>
            <person name="Arnesen T."/>
            <person name="Sherman F."/>
            <person name="Gevaert K."/>
            <person name="Aldabe R."/>
        </authorList>
    </citation>
    <scope>ACETYLATION [LARGE SCALE ANALYSIS] AT SER-2</scope>
    <scope>CLEAVAGE OF INITIATOR METHIONINE [LARGE SCALE ANALYSIS]</scope>
    <scope>IDENTIFICATION BY MASS SPECTROMETRY [LARGE SCALE ANALYSIS]</scope>
</reference>
<reference key="12">
    <citation type="journal article" date="2003" name="Structure">
        <title>Crystal structure of a human Mob1 protein: toward understanding Mob-regulated cell cycle pathways.</title>
        <authorList>
            <person name="Stavridi E.S."/>
            <person name="Harris K.G."/>
            <person name="Huyen Y."/>
            <person name="Bothos J."/>
            <person name="Verwoerd P.-M."/>
            <person name="Stayrook S.E."/>
            <person name="Pavletich N.P."/>
            <person name="Jeffrey P.D."/>
            <person name="Luca F.C."/>
        </authorList>
    </citation>
    <scope>X-RAY CRYSTALLOGRAPHY (2.0 ANGSTROMS) OF 33-216</scope>
    <scope>PARTIAL PROTEIN SEQUENCE</scope>
    <scope>IDENTIFICATION BY MASS SPECTROMETRY</scope>
    <scope>ZINC-BINDING</scope>
</reference>